<gene>
    <name evidence="1" type="primary">hslV</name>
    <name type="ordered locus">Suden_1376</name>
</gene>
<feature type="chain" id="PRO_1000012687" description="ATP-dependent protease subunit HslV">
    <location>
        <begin position="1"/>
        <end position="181"/>
    </location>
</feature>
<feature type="active site" evidence="1">
    <location>
        <position position="5"/>
    </location>
</feature>
<feature type="binding site" evidence="1">
    <location>
        <position position="161"/>
    </location>
    <ligand>
        <name>Na(+)</name>
        <dbReference type="ChEBI" id="CHEBI:29101"/>
    </ligand>
</feature>
<feature type="binding site" evidence="1">
    <location>
        <position position="164"/>
    </location>
    <ligand>
        <name>Na(+)</name>
        <dbReference type="ChEBI" id="CHEBI:29101"/>
    </ligand>
</feature>
<feature type="binding site" evidence="1">
    <location>
        <position position="167"/>
    </location>
    <ligand>
        <name>Na(+)</name>
        <dbReference type="ChEBI" id="CHEBI:29101"/>
    </ligand>
</feature>
<accession>Q30QS8</accession>
<evidence type="ECO:0000255" key="1">
    <source>
        <dbReference type="HAMAP-Rule" id="MF_00248"/>
    </source>
</evidence>
<name>HSLV_SULDN</name>
<comment type="function">
    <text evidence="1">Protease subunit of a proteasome-like degradation complex believed to be a general protein degrading machinery.</text>
</comment>
<comment type="catalytic activity">
    <reaction evidence="1">
        <text>ATP-dependent cleavage of peptide bonds with broad specificity.</text>
        <dbReference type="EC" id="3.4.25.2"/>
    </reaction>
</comment>
<comment type="activity regulation">
    <text evidence="1">Allosterically activated by HslU binding.</text>
</comment>
<comment type="subunit">
    <text evidence="1">A double ring-shaped homohexamer of HslV is capped on each side by a ring-shaped HslU homohexamer. The assembly of the HslU/HslV complex is dependent on binding of ATP.</text>
</comment>
<comment type="subcellular location">
    <subcellularLocation>
        <location evidence="1">Cytoplasm</location>
    </subcellularLocation>
</comment>
<comment type="similarity">
    <text evidence="1">Belongs to the peptidase T1B family. HslV subfamily.</text>
</comment>
<sequence length="181" mass="19633">MFDATTILAYKGKNRAVIGGDGQVTFGNSVLKGNATKIRTLYNGKILAGFAGSTADAFNLFDMFEEFLEAKKGDILKSVVEFSKAWRKDKVLRRLEAMMIVLNSEHIFILTGNGDVVEPEDGEIASIGSGGNFAISAARALKKHSSLDEEALVRESLSIAADLCIYTNHNIKVLSLDGEKK</sequence>
<organism>
    <name type="scientific">Sulfurimonas denitrificans (strain ATCC 33889 / DSM 1251)</name>
    <name type="common">Thiomicrospira denitrificans (strain ATCC 33889 / DSM 1251)</name>
    <dbReference type="NCBI Taxonomy" id="326298"/>
    <lineage>
        <taxon>Bacteria</taxon>
        <taxon>Pseudomonadati</taxon>
        <taxon>Campylobacterota</taxon>
        <taxon>Epsilonproteobacteria</taxon>
        <taxon>Campylobacterales</taxon>
        <taxon>Sulfurimonadaceae</taxon>
        <taxon>Sulfurimonas</taxon>
    </lineage>
</organism>
<proteinExistence type="inferred from homology"/>
<keyword id="KW-0021">Allosteric enzyme</keyword>
<keyword id="KW-0963">Cytoplasm</keyword>
<keyword id="KW-0378">Hydrolase</keyword>
<keyword id="KW-0479">Metal-binding</keyword>
<keyword id="KW-0645">Protease</keyword>
<keyword id="KW-1185">Reference proteome</keyword>
<keyword id="KW-0915">Sodium</keyword>
<keyword id="KW-0888">Threonine protease</keyword>
<reference key="1">
    <citation type="journal article" date="2008" name="Appl. Environ. Microbiol.">
        <title>Genome of the epsilonproteobacterial chemolithoautotroph Sulfurimonas denitrificans.</title>
        <authorList>
            <person name="Sievert S.M."/>
            <person name="Scott K.M."/>
            <person name="Klotz M.G."/>
            <person name="Chain P.S.G."/>
            <person name="Hauser L.J."/>
            <person name="Hemp J."/>
            <person name="Huegler M."/>
            <person name="Land M."/>
            <person name="Lapidus A."/>
            <person name="Larimer F.W."/>
            <person name="Lucas S."/>
            <person name="Malfatti S.A."/>
            <person name="Meyer F."/>
            <person name="Paulsen I.T."/>
            <person name="Ren Q."/>
            <person name="Simon J."/>
            <person name="Bailey K."/>
            <person name="Diaz E."/>
            <person name="Fitzpatrick K.A."/>
            <person name="Glover B."/>
            <person name="Gwatney N."/>
            <person name="Korajkic A."/>
            <person name="Long A."/>
            <person name="Mobberley J.M."/>
            <person name="Pantry S.N."/>
            <person name="Pazder G."/>
            <person name="Peterson S."/>
            <person name="Quintanilla J.D."/>
            <person name="Sprinkle R."/>
            <person name="Stephens J."/>
            <person name="Thomas P."/>
            <person name="Vaughn R."/>
            <person name="Weber M.J."/>
            <person name="Wooten L.L."/>
        </authorList>
    </citation>
    <scope>NUCLEOTIDE SEQUENCE [LARGE SCALE GENOMIC DNA]</scope>
    <source>
        <strain>ATCC 33889 / DSM 1251</strain>
    </source>
</reference>
<dbReference type="EC" id="3.4.25.2" evidence="1"/>
<dbReference type="EMBL" id="CP000153">
    <property type="protein sequence ID" value="ABB44653.1"/>
    <property type="molecule type" value="Genomic_DNA"/>
</dbReference>
<dbReference type="RefSeq" id="WP_011373005.1">
    <property type="nucleotide sequence ID" value="NC_007575.1"/>
</dbReference>
<dbReference type="SMR" id="Q30QS8"/>
<dbReference type="STRING" id="326298.Suden_1376"/>
<dbReference type="KEGG" id="tdn:Suden_1376"/>
<dbReference type="eggNOG" id="COG5405">
    <property type="taxonomic scope" value="Bacteria"/>
</dbReference>
<dbReference type="HOGENOM" id="CLU_093872_1_1_7"/>
<dbReference type="OrthoDB" id="9804884at2"/>
<dbReference type="Proteomes" id="UP000002714">
    <property type="component" value="Chromosome"/>
</dbReference>
<dbReference type="GO" id="GO:0009376">
    <property type="term" value="C:HslUV protease complex"/>
    <property type="evidence" value="ECO:0007669"/>
    <property type="project" value="UniProtKB-UniRule"/>
</dbReference>
<dbReference type="GO" id="GO:0005839">
    <property type="term" value="C:proteasome core complex"/>
    <property type="evidence" value="ECO:0007669"/>
    <property type="project" value="InterPro"/>
</dbReference>
<dbReference type="GO" id="GO:0046872">
    <property type="term" value="F:metal ion binding"/>
    <property type="evidence" value="ECO:0007669"/>
    <property type="project" value="UniProtKB-KW"/>
</dbReference>
<dbReference type="GO" id="GO:0004298">
    <property type="term" value="F:threonine-type endopeptidase activity"/>
    <property type="evidence" value="ECO:0007669"/>
    <property type="project" value="UniProtKB-KW"/>
</dbReference>
<dbReference type="GO" id="GO:0051603">
    <property type="term" value="P:proteolysis involved in protein catabolic process"/>
    <property type="evidence" value="ECO:0007669"/>
    <property type="project" value="InterPro"/>
</dbReference>
<dbReference type="CDD" id="cd01913">
    <property type="entry name" value="protease_HslV"/>
    <property type="match status" value="1"/>
</dbReference>
<dbReference type="Gene3D" id="3.60.20.10">
    <property type="entry name" value="Glutamine Phosphoribosylpyrophosphate, subunit 1, domain 1"/>
    <property type="match status" value="1"/>
</dbReference>
<dbReference type="HAMAP" id="MF_00248">
    <property type="entry name" value="HslV"/>
    <property type="match status" value="1"/>
</dbReference>
<dbReference type="InterPro" id="IPR022281">
    <property type="entry name" value="ATP-dep_Prtase_HsIV_su"/>
</dbReference>
<dbReference type="InterPro" id="IPR029055">
    <property type="entry name" value="Ntn_hydrolases_N"/>
</dbReference>
<dbReference type="InterPro" id="IPR001353">
    <property type="entry name" value="Proteasome_sua/b"/>
</dbReference>
<dbReference type="InterPro" id="IPR023333">
    <property type="entry name" value="Proteasome_suB-type"/>
</dbReference>
<dbReference type="NCBIfam" id="TIGR03692">
    <property type="entry name" value="ATP_dep_HslV"/>
    <property type="match status" value="1"/>
</dbReference>
<dbReference type="NCBIfam" id="NF003964">
    <property type="entry name" value="PRK05456.1"/>
    <property type="match status" value="1"/>
</dbReference>
<dbReference type="PANTHER" id="PTHR32194:SF0">
    <property type="entry name" value="ATP-DEPENDENT PROTEASE SUBUNIT HSLV"/>
    <property type="match status" value="1"/>
</dbReference>
<dbReference type="PANTHER" id="PTHR32194">
    <property type="entry name" value="METALLOPROTEASE TLDD"/>
    <property type="match status" value="1"/>
</dbReference>
<dbReference type="Pfam" id="PF00227">
    <property type="entry name" value="Proteasome"/>
    <property type="match status" value="1"/>
</dbReference>
<dbReference type="SUPFAM" id="SSF56235">
    <property type="entry name" value="N-terminal nucleophile aminohydrolases (Ntn hydrolases)"/>
    <property type="match status" value="1"/>
</dbReference>
<dbReference type="PROSITE" id="PS51476">
    <property type="entry name" value="PROTEASOME_BETA_2"/>
    <property type="match status" value="1"/>
</dbReference>
<protein>
    <recommendedName>
        <fullName evidence="1">ATP-dependent protease subunit HslV</fullName>
        <ecNumber evidence="1">3.4.25.2</ecNumber>
    </recommendedName>
</protein>